<reference key="1">
    <citation type="journal article" date="2009" name="PLoS Biol.">
        <title>Lineage-specific biology revealed by a finished genome assembly of the mouse.</title>
        <authorList>
            <person name="Church D.M."/>
            <person name="Goodstadt L."/>
            <person name="Hillier L.W."/>
            <person name="Zody M.C."/>
            <person name="Goldstein S."/>
            <person name="She X."/>
            <person name="Bult C.J."/>
            <person name="Agarwala R."/>
            <person name="Cherry J.L."/>
            <person name="DiCuccio M."/>
            <person name="Hlavina W."/>
            <person name="Kapustin Y."/>
            <person name="Meric P."/>
            <person name="Maglott D."/>
            <person name="Birtle Z."/>
            <person name="Marques A.C."/>
            <person name="Graves T."/>
            <person name="Zhou S."/>
            <person name="Teague B."/>
            <person name="Potamousis K."/>
            <person name="Churas C."/>
            <person name="Place M."/>
            <person name="Herschleb J."/>
            <person name="Runnheim R."/>
            <person name="Forrest D."/>
            <person name="Amos-Landgraf J."/>
            <person name="Schwartz D.C."/>
            <person name="Cheng Z."/>
            <person name="Lindblad-Toh K."/>
            <person name="Eichler E.E."/>
            <person name="Ponting C.P."/>
        </authorList>
    </citation>
    <scope>NUCLEOTIDE SEQUENCE [LARGE SCALE GENOMIC DNA]</scope>
    <source>
        <strain>C57BL/6J</strain>
    </source>
</reference>
<protein>
    <recommendedName>
        <fullName>Actin-like protein 10</fullName>
    </recommendedName>
</protein>
<name>ACL10_MOUSE</name>
<feature type="chain" id="PRO_0000374670" description="Actin-like protein 10">
    <location>
        <begin position="1"/>
        <end position="346"/>
    </location>
</feature>
<proteinExistence type="inferred from homology"/>
<gene>
    <name type="primary">Actl10</name>
</gene>
<keyword id="KW-1185">Reference proteome</keyword>
<organism>
    <name type="scientific">Mus musculus</name>
    <name type="common">Mouse</name>
    <dbReference type="NCBI Taxonomy" id="10090"/>
    <lineage>
        <taxon>Eukaryota</taxon>
        <taxon>Metazoa</taxon>
        <taxon>Chordata</taxon>
        <taxon>Craniata</taxon>
        <taxon>Vertebrata</taxon>
        <taxon>Euteleostomi</taxon>
        <taxon>Mammalia</taxon>
        <taxon>Eutheria</taxon>
        <taxon>Euarchontoglires</taxon>
        <taxon>Glires</taxon>
        <taxon>Rodentia</taxon>
        <taxon>Myomorpha</taxon>
        <taxon>Muroidea</taxon>
        <taxon>Muridae</taxon>
        <taxon>Murinae</taxon>
        <taxon>Mus</taxon>
        <taxon>Mus</taxon>
    </lineage>
</organism>
<sequence length="346" mass="37759">MKPRIVLKSSSLMPSWDRPVLPGAPGCELAGGVARAHPIKHGVVVDWDALEGLWERLMVGGLQVHPEQWPVLVSDSPSAPPKGREKVAELLFEALTVPACHMANTALLALCSIGAFSGLAVEAGAGVCHATPIYAGHSWHKATFRLNVAGSTLSRYFRDLLVAACPDLQLQGLSRKTVTQLKKRCCYVSLDFQGDICDPARHQRACFCLGNGCYVRLGSERFRCPEPIFQPSLLGHPEPGLPTLAFQALQKIPTTLRTRLANTVVLAGGSTLFPGFVERMNLELEAQCRRHGYPALQPCLVAHPGRDTAVWTGGSMMASLNSFQCRWMTRAMYQEHGPLLVRDVFD</sequence>
<comment type="similarity">
    <text evidence="1">Belongs to the actin family.</text>
</comment>
<accession>A2AKE7</accession>
<evidence type="ECO:0000305" key="1"/>
<dbReference type="EMBL" id="AL772292">
    <property type="status" value="NOT_ANNOTATED_CDS"/>
    <property type="molecule type" value="Genomic_DNA"/>
</dbReference>
<dbReference type="CCDS" id="CCDS50765.1"/>
<dbReference type="RefSeq" id="NP_001165111.1">
    <property type="nucleotide sequence ID" value="NM_001171640.2"/>
</dbReference>
<dbReference type="SMR" id="A2AKE7"/>
<dbReference type="FunCoup" id="A2AKE7">
    <property type="interactions" value="10"/>
</dbReference>
<dbReference type="STRING" id="10090.ENSMUSP00000100532"/>
<dbReference type="iPTMnet" id="A2AKE7"/>
<dbReference type="PhosphoSitePlus" id="A2AKE7"/>
<dbReference type="PaxDb" id="10090-ENSMUSP00000100532"/>
<dbReference type="ProteomicsDB" id="285977"/>
<dbReference type="Ensembl" id="ENSMUST00000104928.2">
    <property type="protein sequence ID" value="ENSMUSP00000100532.2"/>
    <property type="gene ID" value="ENSMUSG00000078129.4"/>
</dbReference>
<dbReference type="GeneID" id="70362"/>
<dbReference type="KEGG" id="mmu:70362"/>
<dbReference type="UCSC" id="uc012cgx.1">
    <property type="organism name" value="mouse"/>
</dbReference>
<dbReference type="AGR" id="MGI:1917612"/>
<dbReference type="CTD" id="170487"/>
<dbReference type="MGI" id="MGI:1917612">
    <property type="gene designation" value="Actl10"/>
</dbReference>
<dbReference type="VEuPathDB" id="HostDB:ENSMUSG00000078129"/>
<dbReference type="eggNOG" id="KOG0676">
    <property type="taxonomic scope" value="Eukaryota"/>
</dbReference>
<dbReference type="GeneTree" id="ENSGT00940000162922"/>
<dbReference type="HOGENOM" id="CLU_027965_0_2_1"/>
<dbReference type="InParanoid" id="A2AKE7"/>
<dbReference type="OMA" id="HPIKHGV"/>
<dbReference type="OrthoDB" id="9870582at2759"/>
<dbReference type="PhylomeDB" id="A2AKE7"/>
<dbReference type="TreeFam" id="TF354237"/>
<dbReference type="BioGRID-ORCS" id="70362">
    <property type="hits" value="2 hits in 80 CRISPR screens"/>
</dbReference>
<dbReference type="PRO" id="PR:A2AKE7"/>
<dbReference type="Proteomes" id="UP000000589">
    <property type="component" value="Chromosome 2"/>
</dbReference>
<dbReference type="RNAct" id="A2AKE7">
    <property type="molecule type" value="protein"/>
</dbReference>
<dbReference type="Bgee" id="ENSMUSG00000078129">
    <property type="expression patterns" value="Expressed in spermatid and 22 other cell types or tissues"/>
</dbReference>
<dbReference type="Gene3D" id="3.30.420.40">
    <property type="match status" value="2"/>
</dbReference>
<dbReference type="Gene3D" id="3.90.640.10">
    <property type="entry name" value="Actin, Chain A, domain 4"/>
    <property type="match status" value="1"/>
</dbReference>
<dbReference type="InterPro" id="IPR004000">
    <property type="entry name" value="Actin"/>
</dbReference>
<dbReference type="InterPro" id="IPR043129">
    <property type="entry name" value="ATPase_NBD"/>
</dbReference>
<dbReference type="PANTHER" id="PTHR11937">
    <property type="entry name" value="ACTIN"/>
    <property type="match status" value="1"/>
</dbReference>
<dbReference type="Pfam" id="PF00022">
    <property type="entry name" value="Actin"/>
    <property type="match status" value="1"/>
</dbReference>
<dbReference type="PRINTS" id="PR00190">
    <property type="entry name" value="ACTIN"/>
</dbReference>
<dbReference type="SMART" id="SM00268">
    <property type="entry name" value="ACTIN"/>
    <property type="match status" value="1"/>
</dbReference>
<dbReference type="SUPFAM" id="SSF53067">
    <property type="entry name" value="Actin-like ATPase domain"/>
    <property type="match status" value="2"/>
</dbReference>